<dbReference type="EC" id="2.4.2.-" evidence="1"/>
<dbReference type="EMBL" id="CP002062">
    <property type="protein sequence ID" value="ADJ14596.1"/>
    <property type="molecule type" value="Genomic_DNA"/>
</dbReference>
<dbReference type="RefSeq" id="WP_008414784.1">
    <property type="nucleotide sequence ID" value="NC_014297.1"/>
</dbReference>
<dbReference type="SMR" id="D8JA74"/>
<dbReference type="STRING" id="795797.HacjB3_06025"/>
<dbReference type="GeneID" id="9419010"/>
<dbReference type="KEGG" id="hje:HacjB3_06025"/>
<dbReference type="eggNOG" id="arCOG00030">
    <property type="taxonomic scope" value="Archaea"/>
</dbReference>
<dbReference type="HOGENOM" id="CLU_126376_0_0_2"/>
<dbReference type="OrthoDB" id="8323at2157"/>
<dbReference type="Proteomes" id="UP000000390">
    <property type="component" value="Chromosome"/>
</dbReference>
<dbReference type="GO" id="GO:0016740">
    <property type="term" value="F:transferase activity"/>
    <property type="evidence" value="ECO:0007669"/>
    <property type="project" value="UniProtKB-KW"/>
</dbReference>
<dbReference type="GO" id="GO:0006166">
    <property type="term" value="P:purine ribonucleoside salvage"/>
    <property type="evidence" value="ECO:0007669"/>
    <property type="project" value="UniProtKB-KW"/>
</dbReference>
<dbReference type="CDD" id="cd06223">
    <property type="entry name" value="PRTases_typeI"/>
    <property type="match status" value="1"/>
</dbReference>
<dbReference type="Gene3D" id="3.40.50.2020">
    <property type="match status" value="1"/>
</dbReference>
<dbReference type="HAMAP" id="MF_01467">
    <property type="entry name" value="Hypx_phosphoribosyltr"/>
    <property type="match status" value="1"/>
</dbReference>
<dbReference type="InterPro" id="IPR026597">
    <property type="entry name" value="HGPRTase-like"/>
</dbReference>
<dbReference type="InterPro" id="IPR000836">
    <property type="entry name" value="PRibTrfase_dom"/>
</dbReference>
<dbReference type="InterPro" id="IPR029057">
    <property type="entry name" value="PRTase-like"/>
</dbReference>
<dbReference type="InterPro" id="IPR050118">
    <property type="entry name" value="Pur/Pyrimidine_PRTase"/>
</dbReference>
<dbReference type="NCBIfam" id="NF040646">
    <property type="entry name" value="HPT_Archaea"/>
    <property type="match status" value="1"/>
</dbReference>
<dbReference type="NCBIfam" id="NF002635">
    <property type="entry name" value="PRK02304.1-4"/>
    <property type="match status" value="1"/>
</dbReference>
<dbReference type="PANTHER" id="PTHR43864">
    <property type="entry name" value="HYPOXANTHINE/GUANINE PHOSPHORIBOSYLTRANSFERASE"/>
    <property type="match status" value="1"/>
</dbReference>
<dbReference type="PANTHER" id="PTHR43864:SF1">
    <property type="entry name" value="XANTHINE PHOSPHORIBOSYLTRANSFERASE"/>
    <property type="match status" value="1"/>
</dbReference>
<dbReference type="Pfam" id="PF00156">
    <property type="entry name" value="Pribosyltran"/>
    <property type="match status" value="1"/>
</dbReference>
<dbReference type="SUPFAM" id="SSF53271">
    <property type="entry name" value="PRTase-like"/>
    <property type="match status" value="1"/>
</dbReference>
<dbReference type="PROSITE" id="PS00103">
    <property type="entry name" value="PUR_PYR_PR_TRANSFER"/>
    <property type="match status" value="1"/>
</dbReference>
<organism>
    <name type="scientific">Halalkalicoccus jeotgali (strain DSM 18796 / CECT 7217 / JCM 14584 / KCTC 4019 / B3)</name>
    <dbReference type="NCBI Taxonomy" id="795797"/>
    <lineage>
        <taxon>Archaea</taxon>
        <taxon>Methanobacteriati</taxon>
        <taxon>Methanobacteriota</taxon>
        <taxon>Stenosarchaea group</taxon>
        <taxon>Halobacteria</taxon>
        <taxon>Halobacteriales</taxon>
        <taxon>Halococcaceae</taxon>
        <taxon>Halalkalicoccus</taxon>
    </lineage>
</organism>
<accession>D8JA74</accession>
<protein>
    <recommendedName>
        <fullName evidence="1">HGPRTase-like protein 1</fullName>
        <ecNumber evidence="1">2.4.2.-</ecNumber>
    </recommendedName>
</protein>
<comment type="function">
    <text evidence="1">May catalyze a purine salvage reaction, the substrate is unknown.</text>
</comment>
<comment type="similarity">
    <text evidence="1">Belongs to the purine/pyrimidine phosphoribosyltransferase family. Archaeal HPRT subfamily.</text>
</comment>
<name>HPRL1_HALJB</name>
<reference key="1">
    <citation type="journal article" date="2010" name="J. Bacteriol.">
        <title>Complete genome sequence of Halalkalicoccus jeotgali B3(T), an extremely halophilic archaeon.</title>
        <authorList>
            <person name="Roh S.W."/>
            <person name="Nam Y.D."/>
            <person name="Nam S.H."/>
            <person name="Choi S.H."/>
            <person name="Park H.S."/>
            <person name="Bae J.W."/>
        </authorList>
    </citation>
    <scope>NUCLEOTIDE SEQUENCE [LARGE SCALE GENOMIC DNA]</scope>
    <source>
        <strain>DSM 18796 / CECT 7217 / JCM 14584 / KCTC 4019 / B3</strain>
    </source>
</reference>
<gene>
    <name type="ordered locus">HacjB3_06025</name>
</gene>
<feature type="chain" id="PRO_0000415449" description="HGPRTase-like protein 1">
    <location>
        <begin position="1"/>
        <end position="181"/>
    </location>
</feature>
<sequence>METLIASLDDAPIIDKDGYEYLVHPISNGVPMLDPALLREVVVELMQTAELDVDKIVTPEAMGIHLSTALSLQTDIPLVVIRKRAYGLDGEVSLHQQTGYSESEMYINDVEAGDRVLVVDDLLSTGGTLAAICASLSDIGAEIADVVVVLRKVGPSALDDTEFEVTSLLDITVEDGEVLVH</sequence>
<keyword id="KW-0660">Purine salvage</keyword>
<keyword id="KW-0808">Transferase</keyword>
<proteinExistence type="inferred from homology"/>
<evidence type="ECO:0000255" key="1">
    <source>
        <dbReference type="HAMAP-Rule" id="MF_01467"/>
    </source>
</evidence>